<protein>
    <recommendedName>
        <fullName>Probable carboxypeptidase BDCG_03757</fullName>
        <ecNumber>3.4.17.-</ecNumber>
    </recommendedName>
    <alternativeName>
        <fullName>Peptidase M20 domain-containing protein BDCG_03757</fullName>
    </alternativeName>
</protein>
<reference key="1">
    <citation type="journal article" date="2015" name="PLoS Genet.">
        <title>The dynamic genome and transcriptome of the human fungal pathogen Blastomyces and close relative Emmonsia.</title>
        <authorList>
            <person name="Munoz J.F."/>
            <person name="Gauthier G.M."/>
            <person name="Desjardins C.A."/>
            <person name="Gallo J.E."/>
            <person name="Holder J."/>
            <person name="Sullivan T.D."/>
            <person name="Marty A.J."/>
            <person name="Carmen J.C."/>
            <person name="Chen Z."/>
            <person name="Ding L."/>
            <person name="Gujja S."/>
            <person name="Magrini V."/>
            <person name="Misas E."/>
            <person name="Mitreva M."/>
            <person name="Priest M."/>
            <person name="Saif S."/>
            <person name="Whiston E.A."/>
            <person name="Young S."/>
            <person name="Zeng Q."/>
            <person name="Goldman W.E."/>
            <person name="Mardis E.R."/>
            <person name="Taylor J.W."/>
            <person name="McEwen J.G."/>
            <person name="Clay O.K."/>
            <person name="Klein B.S."/>
            <person name="Cuomo C.A."/>
        </authorList>
    </citation>
    <scope>NUCLEOTIDE SEQUENCE [LARGE SCALE GENOMIC DNA]</scope>
    <source>
        <strain>ER-3 / ATCC MYA-2586</strain>
    </source>
</reference>
<dbReference type="EC" id="3.4.17.-"/>
<dbReference type="EMBL" id="EQ999975">
    <property type="protein sequence ID" value="EEQ88637.1"/>
    <property type="molecule type" value="Genomic_DNA"/>
</dbReference>
<dbReference type="RefSeq" id="XP_045275727.1">
    <property type="nucleotide sequence ID" value="XM_045419411.1"/>
</dbReference>
<dbReference type="SMR" id="C5GFX4"/>
<dbReference type="STRING" id="559297.C5GFX4"/>
<dbReference type="GeneID" id="69026015"/>
<dbReference type="VEuPathDB" id="FungiDB:BDCG_03757"/>
<dbReference type="eggNOG" id="KOG2275">
    <property type="taxonomic scope" value="Eukaryota"/>
</dbReference>
<dbReference type="HOGENOM" id="CLU_021802_3_0_1"/>
<dbReference type="OMA" id="RLHKGVM"/>
<dbReference type="GO" id="GO:0005576">
    <property type="term" value="C:extracellular region"/>
    <property type="evidence" value="ECO:0007669"/>
    <property type="project" value="UniProtKB-SubCell"/>
</dbReference>
<dbReference type="GO" id="GO:0046872">
    <property type="term" value="F:metal ion binding"/>
    <property type="evidence" value="ECO:0007669"/>
    <property type="project" value="UniProtKB-KW"/>
</dbReference>
<dbReference type="GO" id="GO:0008233">
    <property type="term" value="F:peptidase activity"/>
    <property type="evidence" value="ECO:0007669"/>
    <property type="project" value="UniProtKB-KW"/>
</dbReference>
<dbReference type="GO" id="GO:0006508">
    <property type="term" value="P:proteolysis"/>
    <property type="evidence" value="ECO:0007669"/>
    <property type="project" value="UniProtKB-KW"/>
</dbReference>
<dbReference type="CDD" id="cd05652">
    <property type="entry name" value="M20_ArgE_DapE-like_fungal"/>
    <property type="match status" value="1"/>
</dbReference>
<dbReference type="Gene3D" id="3.30.70.360">
    <property type="match status" value="1"/>
</dbReference>
<dbReference type="Gene3D" id="3.40.630.10">
    <property type="entry name" value="Zn peptidases"/>
    <property type="match status" value="1"/>
</dbReference>
<dbReference type="InterPro" id="IPR036264">
    <property type="entry name" value="Bact_exopeptidase_dim_dom"/>
</dbReference>
<dbReference type="InterPro" id="IPR002933">
    <property type="entry name" value="Peptidase_M20"/>
</dbReference>
<dbReference type="InterPro" id="IPR011650">
    <property type="entry name" value="Peptidase_M20_dimer"/>
</dbReference>
<dbReference type="InterPro" id="IPR050072">
    <property type="entry name" value="Peptidase_M20A"/>
</dbReference>
<dbReference type="PANTHER" id="PTHR43808">
    <property type="entry name" value="ACETYLORNITHINE DEACETYLASE"/>
    <property type="match status" value="1"/>
</dbReference>
<dbReference type="PANTHER" id="PTHR43808:SF8">
    <property type="entry name" value="PEPTIDASE M20 DIMERISATION DOMAIN-CONTAINING PROTEIN"/>
    <property type="match status" value="1"/>
</dbReference>
<dbReference type="Pfam" id="PF07687">
    <property type="entry name" value="M20_dimer"/>
    <property type="match status" value="1"/>
</dbReference>
<dbReference type="Pfam" id="PF01546">
    <property type="entry name" value="Peptidase_M20"/>
    <property type="match status" value="1"/>
</dbReference>
<dbReference type="SUPFAM" id="SSF55031">
    <property type="entry name" value="Bacterial exopeptidase dimerisation domain"/>
    <property type="match status" value="1"/>
</dbReference>
<dbReference type="SUPFAM" id="SSF53187">
    <property type="entry name" value="Zn-dependent exopeptidases"/>
    <property type="match status" value="1"/>
</dbReference>
<comment type="cofactor">
    <cofactor evidence="1">
        <name>Zn(2+)</name>
        <dbReference type="ChEBI" id="CHEBI:29105"/>
    </cofactor>
    <text evidence="1">Binds 2 Zn(2+) ions per subunit.</text>
</comment>
<comment type="subcellular location">
    <subcellularLocation>
        <location evidence="3">Secreted</location>
    </subcellularLocation>
</comment>
<comment type="similarity">
    <text evidence="3">Belongs to the peptidase M20A family.</text>
</comment>
<name>P20D1_AJEDR</name>
<keyword id="KW-0325">Glycoprotein</keyword>
<keyword id="KW-0378">Hydrolase</keyword>
<keyword id="KW-0479">Metal-binding</keyword>
<keyword id="KW-0645">Protease</keyword>
<keyword id="KW-0964">Secreted</keyword>
<keyword id="KW-0732">Signal</keyword>
<keyword id="KW-0862">Zinc</keyword>
<feature type="signal peptide" evidence="2">
    <location>
        <begin position="1"/>
        <end position="20"/>
    </location>
</feature>
<feature type="chain" id="PRO_0000411222" description="Probable carboxypeptidase BDCG_03757">
    <location>
        <begin position="21"/>
        <end position="434"/>
    </location>
</feature>
<feature type="active site" description="Proton acceptor" evidence="1">
    <location>
        <position position="192"/>
    </location>
</feature>
<feature type="binding site" evidence="1">
    <location>
        <position position="160"/>
    </location>
    <ligand>
        <name>Zn(2+)</name>
        <dbReference type="ChEBI" id="CHEBI:29105"/>
        <label>1</label>
    </ligand>
</feature>
<feature type="binding site" evidence="1">
    <location>
        <position position="160"/>
    </location>
    <ligand>
        <name>Zn(2+)</name>
        <dbReference type="ChEBI" id="CHEBI:29105"/>
        <label>2</label>
    </ligand>
</feature>
<feature type="binding site" evidence="1">
    <location>
        <position position="193"/>
    </location>
    <ligand>
        <name>Zn(2+)</name>
        <dbReference type="ChEBI" id="CHEBI:29105"/>
        <label>1</label>
    </ligand>
</feature>
<feature type="glycosylation site" description="N-linked (GlcNAc...) asparagine" evidence="2">
    <location>
        <position position="136"/>
    </location>
</feature>
<feature type="glycosylation site" description="N-linked (GlcNAc...) asparagine" evidence="2">
    <location>
        <position position="150"/>
    </location>
</feature>
<feature type="glycosylation site" description="N-linked (GlcNAc...) asparagine" evidence="2">
    <location>
        <position position="343"/>
    </location>
</feature>
<accession>C5GFX4</accession>
<gene>
    <name type="ORF">BDCG_03757</name>
</gene>
<organism>
    <name type="scientific">Ajellomyces dermatitidis (strain ER-3 / ATCC MYA-2586)</name>
    <name type="common">Blastomyces dermatitidis</name>
    <dbReference type="NCBI Taxonomy" id="559297"/>
    <lineage>
        <taxon>Eukaryota</taxon>
        <taxon>Fungi</taxon>
        <taxon>Dikarya</taxon>
        <taxon>Ascomycota</taxon>
        <taxon>Pezizomycotina</taxon>
        <taxon>Eurotiomycetes</taxon>
        <taxon>Eurotiomycetidae</taxon>
        <taxon>Onygenales</taxon>
        <taxon>Ajellomycetaceae</taxon>
        <taxon>Blastomyces</taxon>
    </lineage>
</organism>
<proteinExistence type="inferred from homology"/>
<sequence length="434" mass="46285">MKLSHLAAALSAQLVAPVAAGYLRQDILTAGTLRDTTVPAAPNEDLNQIVSDSQLLSLHRTICEIESVSNHESTVGEALIKYLGEHDFTTEKQIVPVDEDDDSTDERYNVWAYPKGSPKPKIILTSHIDTVPPHINYSLHAPEGDFDRANITIKGRGTVDAKASVAAMIIAALDHMKESPDVPVGLLFVVSEERGGTGMIHFSDSELNTSPPFFHTLIFGEPTELKLVDGHKGNLRFDVEAKGVSAHSGYPWLGHSAISEILPVLARIDGLGDIPVEDGGLPSSEKYGSTTLNIGTVRGGAAGNVVPESASASVAVRLADGTVEDAQDIIRKAVADASGGSKNITLKFPDDKAYPPIDLDTDVDGFELLTVNYGTDIPKLDIHDEDSDVKVKRYLYGPGTILVAHGVDEGLTVGDLEKAVEGYSKLIDAAVKRG</sequence>
<evidence type="ECO:0000250" key="1"/>
<evidence type="ECO:0000255" key="2"/>
<evidence type="ECO:0000305" key="3"/>